<evidence type="ECO:0000255" key="1">
    <source>
        <dbReference type="HAMAP-Rule" id="MF_01108"/>
    </source>
</evidence>
<protein>
    <recommendedName>
        <fullName evidence="1">Acetylornithine deacetylase</fullName>
        <shortName evidence="1">AO</shortName>
        <shortName evidence="1">Acetylornithinase</shortName>
        <ecNumber evidence="1">3.5.1.16</ecNumber>
    </recommendedName>
    <alternativeName>
        <fullName evidence="1">N-acetylornithinase</fullName>
        <shortName evidence="1">NAO</shortName>
    </alternativeName>
</protein>
<feature type="chain" id="PRO_1000065054" description="Acetylornithine deacetylase">
    <location>
        <begin position="1"/>
        <end position="383"/>
    </location>
</feature>
<feature type="active site" evidence="1">
    <location>
        <position position="82"/>
    </location>
</feature>
<feature type="active site" evidence="1">
    <location>
        <position position="144"/>
    </location>
</feature>
<feature type="binding site" evidence="1">
    <location>
        <position position="80"/>
    </location>
    <ligand>
        <name>Zn(2+)</name>
        <dbReference type="ChEBI" id="CHEBI:29105"/>
        <label>1</label>
    </ligand>
</feature>
<feature type="binding site" evidence="1">
    <location>
        <position position="112"/>
    </location>
    <ligand>
        <name>Zn(2+)</name>
        <dbReference type="ChEBI" id="CHEBI:29105"/>
        <label>1</label>
    </ligand>
</feature>
<feature type="binding site" evidence="1">
    <location>
        <position position="112"/>
    </location>
    <ligand>
        <name>Zn(2+)</name>
        <dbReference type="ChEBI" id="CHEBI:29105"/>
        <label>2</label>
    </ligand>
</feature>
<feature type="binding site" evidence="1">
    <location>
        <position position="145"/>
    </location>
    <ligand>
        <name>Zn(2+)</name>
        <dbReference type="ChEBI" id="CHEBI:29105"/>
        <label>2</label>
    </ligand>
</feature>
<feature type="binding site" evidence="1">
    <location>
        <position position="169"/>
    </location>
    <ligand>
        <name>Zn(2+)</name>
        <dbReference type="ChEBI" id="CHEBI:29105"/>
        <label>1</label>
    </ligand>
</feature>
<feature type="binding site" evidence="1">
    <location>
        <position position="355"/>
    </location>
    <ligand>
        <name>Zn(2+)</name>
        <dbReference type="ChEBI" id="CHEBI:29105"/>
        <label>2</label>
    </ligand>
</feature>
<accession>A7ZUH5</accession>
<name>ARGE_ECO24</name>
<organism>
    <name type="scientific">Escherichia coli O139:H28 (strain E24377A / ETEC)</name>
    <dbReference type="NCBI Taxonomy" id="331111"/>
    <lineage>
        <taxon>Bacteria</taxon>
        <taxon>Pseudomonadati</taxon>
        <taxon>Pseudomonadota</taxon>
        <taxon>Gammaproteobacteria</taxon>
        <taxon>Enterobacterales</taxon>
        <taxon>Enterobacteriaceae</taxon>
        <taxon>Escherichia</taxon>
    </lineage>
</organism>
<reference key="1">
    <citation type="journal article" date="2008" name="J. Bacteriol.">
        <title>The pangenome structure of Escherichia coli: comparative genomic analysis of E. coli commensal and pathogenic isolates.</title>
        <authorList>
            <person name="Rasko D.A."/>
            <person name="Rosovitz M.J."/>
            <person name="Myers G.S.A."/>
            <person name="Mongodin E.F."/>
            <person name="Fricke W.F."/>
            <person name="Gajer P."/>
            <person name="Crabtree J."/>
            <person name="Sebaihia M."/>
            <person name="Thomson N.R."/>
            <person name="Chaudhuri R."/>
            <person name="Henderson I.R."/>
            <person name="Sperandio V."/>
            <person name="Ravel J."/>
        </authorList>
    </citation>
    <scope>NUCLEOTIDE SEQUENCE [LARGE SCALE GENOMIC DNA]</scope>
    <source>
        <strain>E24377A / ETEC</strain>
    </source>
</reference>
<sequence>MKNKLPPFIEIYRALIATPSISATEEALDQSNADLITLLADWFKDLGFNVEVQPVPGTRNKFNMLASCGQGAGGLLLAGHTDTVPFDDGRWTRDPFTLTEHDGKLYGLGTADMKGFFAFILDALRDVDVTKLKKPLYILATADEETSMAGARYFAETTALRPDCAIIGEPTSLQPVRAHKGHISNAIRIQGQSGHSSDPARGVNAIELMHDAIGHILQLRDNLKERYHYEAFTVPYPTLNLGHIHGGDASNRICACCELHMDIRPLPGMTLNELNGLLNDALAPVNERWPGRLTVDELHPPIPGYECPPNHQLVEVVEKLLGAKTEVVNYCTEAPFIQTLCPTLVLGPGSINQAHQPDEYLETRFIKPTRELITQVIHHFCWH</sequence>
<keyword id="KW-0028">Amino-acid biosynthesis</keyword>
<keyword id="KW-0055">Arginine biosynthesis</keyword>
<keyword id="KW-0170">Cobalt</keyword>
<keyword id="KW-0963">Cytoplasm</keyword>
<keyword id="KW-0378">Hydrolase</keyword>
<keyword id="KW-0479">Metal-binding</keyword>
<keyword id="KW-1185">Reference proteome</keyword>
<keyword id="KW-0862">Zinc</keyword>
<comment type="function">
    <text evidence="1">Catalyzes the hydrolysis of the amide bond of N(2)-acetylated L-amino acids. Cleaves the acetyl group from N-acetyl-L-ornithine to form L-ornithine, an intermediate in L-arginine biosynthesis pathway, and a branchpoint in the synthesis of polyamines.</text>
</comment>
<comment type="catalytic activity">
    <reaction evidence="1">
        <text>N(2)-acetyl-L-ornithine + H2O = L-ornithine + acetate</text>
        <dbReference type="Rhea" id="RHEA:15941"/>
        <dbReference type="ChEBI" id="CHEBI:15377"/>
        <dbReference type="ChEBI" id="CHEBI:30089"/>
        <dbReference type="ChEBI" id="CHEBI:46911"/>
        <dbReference type="ChEBI" id="CHEBI:57805"/>
        <dbReference type="EC" id="3.5.1.16"/>
    </reaction>
</comment>
<comment type="cofactor">
    <cofactor evidence="1">
        <name>Zn(2+)</name>
        <dbReference type="ChEBI" id="CHEBI:29105"/>
    </cofactor>
    <cofactor evidence="1">
        <name>Co(2+)</name>
        <dbReference type="ChEBI" id="CHEBI:48828"/>
    </cofactor>
    <text evidence="1">Binds 2 Zn(2+) or Co(2+) ions per subunit.</text>
</comment>
<comment type="cofactor">
    <cofactor evidence="1">
        <name>glutathione</name>
        <dbReference type="ChEBI" id="CHEBI:57925"/>
    </cofactor>
</comment>
<comment type="pathway">
    <text evidence="1">Amino-acid biosynthesis; L-arginine biosynthesis; L-ornithine from N(2)-acetyl-L-ornithine (linear): step 1/1.</text>
</comment>
<comment type="subunit">
    <text evidence="1">Homodimer.</text>
</comment>
<comment type="subcellular location">
    <subcellularLocation>
        <location evidence="1">Cytoplasm</location>
    </subcellularLocation>
</comment>
<comment type="similarity">
    <text evidence="1">Belongs to the peptidase M20A family. ArgE subfamily.</text>
</comment>
<proteinExistence type="inferred from homology"/>
<gene>
    <name evidence="1" type="primary">argE</name>
    <name type="ordered locus">EcE24377A_4496</name>
</gene>
<dbReference type="EC" id="3.5.1.16" evidence="1"/>
<dbReference type="EMBL" id="CP000800">
    <property type="protein sequence ID" value="ABV20039.1"/>
    <property type="molecule type" value="Genomic_DNA"/>
</dbReference>
<dbReference type="RefSeq" id="WP_012139706.1">
    <property type="nucleotide sequence ID" value="NC_009801.1"/>
</dbReference>
<dbReference type="SMR" id="A7ZUH5"/>
<dbReference type="MEROPS" id="M20.974"/>
<dbReference type="KEGG" id="ecw:EcE24377A_4496"/>
<dbReference type="HOGENOM" id="CLU_021802_2_4_6"/>
<dbReference type="UniPathway" id="UPA00068">
    <property type="reaction ID" value="UER00110"/>
</dbReference>
<dbReference type="Proteomes" id="UP000001122">
    <property type="component" value="Chromosome"/>
</dbReference>
<dbReference type="GO" id="GO:0005737">
    <property type="term" value="C:cytoplasm"/>
    <property type="evidence" value="ECO:0007669"/>
    <property type="project" value="UniProtKB-SubCell"/>
</dbReference>
<dbReference type="GO" id="GO:0008777">
    <property type="term" value="F:acetylornithine deacetylase activity"/>
    <property type="evidence" value="ECO:0007669"/>
    <property type="project" value="UniProtKB-UniRule"/>
</dbReference>
<dbReference type="GO" id="GO:0008270">
    <property type="term" value="F:zinc ion binding"/>
    <property type="evidence" value="ECO:0007669"/>
    <property type="project" value="UniProtKB-UniRule"/>
</dbReference>
<dbReference type="GO" id="GO:0006526">
    <property type="term" value="P:L-arginine biosynthetic process"/>
    <property type="evidence" value="ECO:0007669"/>
    <property type="project" value="UniProtKB-UniRule"/>
</dbReference>
<dbReference type="CDD" id="cd03894">
    <property type="entry name" value="M20_ArgE"/>
    <property type="match status" value="1"/>
</dbReference>
<dbReference type="FunFam" id="3.30.70.360:FF:000003">
    <property type="entry name" value="Acetylornithine deacetylase"/>
    <property type="match status" value="1"/>
</dbReference>
<dbReference type="Gene3D" id="3.30.70.360">
    <property type="match status" value="1"/>
</dbReference>
<dbReference type="Gene3D" id="3.40.630.10">
    <property type="entry name" value="Zn peptidases"/>
    <property type="match status" value="1"/>
</dbReference>
<dbReference type="HAMAP" id="MF_01108">
    <property type="entry name" value="ArgE"/>
    <property type="match status" value="1"/>
</dbReference>
<dbReference type="InterPro" id="IPR010169">
    <property type="entry name" value="AcOrn-deacetyl"/>
</dbReference>
<dbReference type="InterPro" id="IPR001261">
    <property type="entry name" value="ArgE/DapE_CS"/>
</dbReference>
<dbReference type="InterPro" id="IPR036264">
    <property type="entry name" value="Bact_exopeptidase_dim_dom"/>
</dbReference>
<dbReference type="InterPro" id="IPR002933">
    <property type="entry name" value="Peptidase_M20"/>
</dbReference>
<dbReference type="InterPro" id="IPR011650">
    <property type="entry name" value="Peptidase_M20_dimer"/>
</dbReference>
<dbReference type="InterPro" id="IPR050072">
    <property type="entry name" value="Peptidase_M20A"/>
</dbReference>
<dbReference type="NCBIfam" id="TIGR01892">
    <property type="entry name" value="AcOrn-deacetyl"/>
    <property type="match status" value="1"/>
</dbReference>
<dbReference type="NCBIfam" id="NF003474">
    <property type="entry name" value="PRK05111.1"/>
    <property type="match status" value="1"/>
</dbReference>
<dbReference type="PANTHER" id="PTHR43808">
    <property type="entry name" value="ACETYLORNITHINE DEACETYLASE"/>
    <property type="match status" value="1"/>
</dbReference>
<dbReference type="PANTHER" id="PTHR43808:SF1">
    <property type="entry name" value="ACETYLORNITHINE DEACETYLASE"/>
    <property type="match status" value="1"/>
</dbReference>
<dbReference type="Pfam" id="PF07687">
    <property type="entry name" value="M20_dimer"/>
    <property type="match status" value="1"/>
</dbReference>
<dbReference type="Pfam" id="PF01546">
    <property type="entry name" value="Peptidase_M20"/>
    <property type="match status" value="1"/>
</dbReference>
<dbReference type="SUPFAM" id="SSF55031">
    <property type="entry name" value="Bacterial exopeptidase dimerisation domain"/>
    <property type="match status" value="1"/>
</dbReference>
<dbReference type="SUPFAM" id="SSF53187">
    <property type="entry name" value="Zn-dependent exopeptidases"/>
    <property type="match status" value="1"/>
</dbReference>
<dbReference type="PROSITE" id="PS00758">
    <property type="entry name" value="ARGE_DAPE_CPG2_1"/>
    <property type="match status" value="1"/>
</dbReference>
<dbReference type="PROSITE" id="PS00759">
    <property type="entry name" value="ARGE_DAPE_CPG2_2"/>
    <property type="match status" value="1"/>
</dbReference>